<gene>
    <name evidence="1" type="primary">mtaD</name>
    <name type="ordered locus">VNG_2249G</name>
</gene>
<evidence type="ECO:0000255" key="1">
    <source>
        <dbReference type="HAMAP-Rule" id="MF_01281"/>
    </source>
</evidence>
<accession>Q9HN51</accession>
<dbReference type="EC" id="3.5.4.28" evidence="1"/>
<dbReference type="EC" id="3.5.4.31" evidence="1"/>
<dbReference type="EMBL" id="AE004437">
    <property type="protein sequence ID" value="AAG20370.1"/>
    <property type="molecule type" value="Genomic_DNA"/>
</dbReference>
<dbReference type="PIR" id="F84375">
    <property type="entry name" value="F84375"/>
</dbReference>
<dbReference type="RefSeq" id="WP_010903671.1">
    <property type="nucleotide sequence ID" value="NC_002607.1"/>
</dbReference>
<dbReference type="SMR" id="Q9HN51"/>
<dbReference type="FunCoup" id="Q9HN51">
    <property type="interactions" value="21"/>
</dbReference>
<dbReference type="STRING" id="64091.VNG_2249G"/>
<dbReference type="PaxDb" id="64091-VNG_2249G"/>
<dbReference type="KEGG" id="hal:VNG_2249G"/>
<dbReference type="PATRIC" id="fig|64091.14.peg.1730"/>
<dbReference type="HOGENOM" id="CLU_012358_2_1_2"/>
<dbReference type="InParanoid" id="Q9HN51"/>
<dbReference type="OrthoDB" id="372084at2157"/>
<dbReference type="PhylomeDB" id="Q9HN51"/>
<dbReference type="Proteomes" id="UP000000554">
    <property type="component" value="Chromosome"/>
</dbReference>
<dbReference type="GO" id="GO:0090614">
    <property type="term" value="F:5'-methylthioadenosine deaminase activity"/>
    <property type="evidence" value="ECO:0007669"/>
    <property type="project" value="UniProtKB-UniRule"/>
</dbReference>
<dbReference type="GO" id="GO:0046872">
    <property type="term" value="F:metal ion binding"/>
    <property type="evidence" value="ECO:0007669"/>
    <property type="project" value="UniProtKB-KW"/>
</dbReference>
<dbReference type="GO" id="GO:0050270">
    <property type="term" value="F:S-adenosylhomocysteine deaminase activity"/>
    <property type="evidence" value="ECO:0007669"/>
    <property type="project" value="UniProtKB-UniRule"/>
</dbReference>
<dbReference type="CDD" id="cd01298">
    <property type="entry name" value="ATZ_TRZ_like"/>
    <property type="match status" value="1"/>
</dbReference>
<dbReference type="FunFam" id="3.20.20.140:FF:000014">
    <property type="entry name" value="5-methylthioadenosine/S-adenosylhomocysteine deaminase"/>
    <property type="match status" value="1"/>
</dbReference>
<dbReference type="Gene3D" id="3.20.20.140">
    <property type="entry name" value="Metal-dependent hydrolases"/>
    <property type="match status" value="1"/>
</dbReference>
<dbReference type="Gene3D" id="2.30.40.10">
    <property type="entry name" value="Urease, subunit C, domain 1"/>
    <property type="match status" value="1"/>
</dbReference>
<dbReference type="HAMAP" id="MF_01281">
    <property type="entry name" value="MTA_SAH_deamin"/>
    <property type="match status" value="1"/>
</dbReference>
<dbReference type="InterPro" id="IPR006680">
    <property type="entry name" value="Amidohydro-rel"/>
</dbReference>
<dbReference type="InterPro" id="IPR023512">
    <property type="entry name" value="Deaminase_MtaD/DadD"/>
</dbReference>
<dbReference type="InterPro" id="IPR011059">
    <property type="entry name" value="Metal-dep_hydrolase_composite"/>
</dbReference>
<dbReference type="InterPro" id="IPR032466">
    <property type="entry name" value="Metal_Hydrolase"/>
</dbReference>
<dbReference type="InterPro" id="IPR050287">
    <property type="entry name" value="MTA/SAH_deaminase"/>
</dbReference>
<dbReference type="PANTHER" id="PTHR43794:SF11">
    <property type="entry name" value="AMIDOHYDROLASE-RELATED DOMAIN-CONTAINING PROTEIN"/>
    <property type="match status" value="1"/>
</dbReference>
<dbReference type="PANTHER" id="PTHR43794">
    <property type="entry name" value="AMINOHYDROLASE SSNA-RELATED"/>
    <property type="match status" value="1"/>
</dbReference>
<dbReference type="Pfam" id="PF01979">
    <property type="entry name" value="Amidohydro_1"/>
    <property type="match status" value="1"/>
</dbReference>
<dbReference type="SUPFAM" id="SSF51338">
    <property type="entry name" value="Composite domain of metallo-dependent hydrolases"/>
    <property type="match status" value="1"/>
</dbReference>
<dbReference type="SUPFAM" id="SSF51556">
    <property type="entry name" value="Metallo-dependent hydrolases"/>
    <property type="match status" value="1"/>
</dbReference>
<protein>
    <recommendedName>
        <fullName evidence="1">5-methylthioadenosine/S-adenosylhomocysteine deaminase</fullName>
        <shortName evidence="1">MTA/SAH deaminase</shortName>
        <ecNumber evidence="1">3.5.4.28</ecNumber>
        <ecNumber evidence="1">3.5.4.31</ecNumber>
    </recommendedName>
</protein>
<proteinExistence type="inferred from homology"/>
<reference key="1">
    <citation type="journal article" date="2000" name="Proc. Natl. Acad. Sci. U.S.A.">
        <title>Genome sequence of Halobacterium species NRC-1.</title>
        <authorList>
            <person name="Ng W.V."/>
            <person name="Kennedy S.P."/>
            <person name="Mahairas G.G."/>
            <person name="Berquist B."/>
            <person name="Pan M."/>
            <person name="Shukla H.D."/>
            <person name="Lasky S.R."/>
            <person name="Baliga N.S."/>
            <person name="Thorsson V."/>
            <person name="Sbrogna J."/>
            <person name="Swartzell S."/>
            <person name="Weir D."/>
            <person name="Hall J."/>
            <person name="Dahl T.A."/>
            <person name="Welti R."/>
            <person name="Goo Y.A."/>
            <person name="Leithauser B."/>
            <person name="Keller K."/>
            <person name="Cruz R."/>
            <person name="Danson M.J."/>
            <person name="Hough D.W."/>
            <person name="Maddocks D.G."/>
            <person name="Jablonski P.E."/>
            <person name="Krebs M.P."/>
            <person name="Angevine C.M."/>
            <person name="Dale H."/>
            <person name="Isenbarger T.A."/>
            <person name="Peck R.F."/>
            <person name="Pohlschroder M."/>
            <person name="Spudich J.L."/>
            <person name="Jung K.-H."/>
            <person name="Alam M."/>
            <person name="Freitas T."/>
            <person name="Hou S."/>
            <person name="Daniels C.J."/>
            <person name="Dennis P.P."/>
            <person name="Omer A.D."/>
            <person name="Ebhardt H."/>
            <person name="Lowe T.M."/>
            <person name="Liang P."/>
            <person name="Riley M."/>
            <person name="Hood L."/>
            <person name="DasSarma S."/>
        </authorList>
    </citation>
    <scope>NUCLEOTIDE SEQUENCE [LARGE SCALE GENOMIC DNA]</scope>
    <source>
        <strain>ATCC 700922 / JCM 11081 / NRC-1</strain>
    </source>
</reference>
<sequence>MSDTLRVAGGAVLHPDFTVSDGDVLVDRDAGEIIAVGDTPAGDETVDAAGCLVMPGLVNAHCHVAMTLLRGYADDKQLDAWLQEDIWPAEAELADGDIRAGARLGLVEMIRAGTTAFADMYFEVPEVVDAITEAGLRARVGHGVVTVGKDDADAVADNEEALSVAREFNDAADGRITSAYMPHSLTTVGEEYLREFVAAAREADVPVHFHANETEQEVEPIVDEHGSRPLEYAADVGLLAEDDFLAHGVHTTAGEIELLAESGASVVHCPASNMKLASGMAPVQAMREAGVTVALGTDGAASNNDLDVFDELRDAAMLGKLQTGAADAVPARAAVEMATAGGAAALGFDSGRIEVGANADLAVVDFDAPHLTPVHDHVSHLAYAATGQDVRHTICDGEVLMRDREVLPFDEAAVREQAAQRASELAARAGE</sequence>
<name>MTAD_HALSA</name>
<keyword id="KW-0378">Hydrolase</keyword>
<keyword id="KW-0479">Metal-binding</keyword>
<keyword id="KW-1185">Reference proteome</keyword>
<keyword id="KW-0862">Zinc</keyword>
<organism>
    <name type="scientific">Halobacterium salinarum (strain ATCC 700922 / JCM 11081 / NRC-1)</name>
    <name type="common">Halobacterium halobium</name>
    <dbReference type="NCBI Taxonomy" id="64091"/>
    <lineage>
        <taxon>Archaea</taxon>
        <taxon>Methanobacteriati</taxon>
        <taxon>Methanobacteriota</taxon>
        <taxon>Stenosarchaea group</taxon>
        <taxon>Halobacteria</taxon>
        <taxon>Halobacteriales</taxon>
        <taxon>Halobacteriaceae</taxon>
        <taxon>Halobacterium</taxon>
        <taxon>Halobacterium salinarum NRC-34001</taxon>
    </lineage>
</organism>
<comment type="function">
    <text evidence="1">Catalyzes the deamination of 5-methylthioadenosine and S-adenosyl-L-homocysteine into 5-methylthioinosine and S-inosyl-L-homocysteine, respectively. Is also able to deaminate adenosine.</text>
</comment>
<comment type="catalytic activity">
    <reaction evidence="1">
        <text>S-adenosyl-L-homocysteine + H2O + H(+) = S-inosyl-L-homocysteine + NH4(+)</text>
        <dbReference type="Rhea" id="RHEA:20716"/>
        <dbReference type="ChEBI" id="CHEBI:15377"/>
        <dbReference type="ChEBI" id="CHEBI:15378"/>
        <dbReference type="ChEBI" id="CHEBI:28938"/>
        <dbReference type="ChEBI" id="CHEBI:57856"/>
        <dbReference type="ChEBI" id="CHEBI:57985"/>
        <dbReference type="EC" id="3.5.4.28"/>
    </reaction>
</comment>
<comment type="catalytic activity">
    <reaction evidence="1">
        <text>S-methyl-5'-thioadenosine + H2O + H(+) = S-methyl-5'-thioinosine + NH4(+)</text>
        <dbReference type="Rhea" id="RHEA:25025"/>
        <dbReference type="ChEBI" id="CHEBI:15377"/>
        <dbReference type="ChEBI" id="CHEBI:15378"/>
        <dbReference type="ChEBI" id="CHEBI:17509"/>
        <dbReference type="ChEBI" id="CHEBI:28938"/>
        <dbReference type="ChEBI" id="CHEBI:48595"/>
        <dbReference type="EC" id="3.5.4.31"/>
    </reaction>
</comment>
<comment type="cofactor">
    <cofactor evidence="1">
        <name>Zn(2+)</name>
        <dbReference type="ChEBI" id="CHEBI:29105"/>
    </cofactor>
    <text evidence="1">Binds 1 zinc ion per subunit.</text>
</comment>
<comment type="similarity">
    <text evidence="1">Belongs to the metallo-dependent hydrolases superfamily. MTA/SAH deaminase family.</text>
</comment>
<feature type="chain" id="PRO_0000312467" description="5-methylthioadenosine/S-adenosylhomocysteine deaminase">
    <location>
        <begin position="1"/>
        <end position="431"/>
    </location>
</feature>
<feature type="binding site" evidence="1">
    <location>
        <position position="61"/>
    </location>
    <ligand>
        <name>Zn(2+)</name>
        <dbReference type="ChEBI" id="CHEBI:29105"/>
    </ligand>
</feature>
<feature type="binding site" evidence="1">
    <location>
        <position position="63"/>
    </location>
    <ligand>
        <name>Zn(2+)</name>
        <dbReference type="ChEBI" id="CHEBI:29105"/>
    </ligand>
</feature>
<feature type="binding site" evidence="1">
    <location>
        <position position="90"/>
    </location>
    <ligand>
        <name>substrate</name>
    </ligand>
</feature>
<feature type="binding site" evidence="1">
    <location>
        <position position="183"/>
    </location>
    <ligand>
        <name>substrate</name>
    </ligand>
</feature>
<feature type="binding site" evidence="1">
    <location>
        <position position="210"/>
    </location>
    <ligand>
        <name>Zn(2+)</name>
        <dbReference type="ChEBI" id="CHEBI:29105"/>
    </ligand>
</feature>
<feature type="binding site" evidence="1">
    <location>
        <position position="213"/>
    </location>
    <ligand>
        <name>substrate</name>
    </ligand>
</feature>
<feature type="binding site" evidence="1">
    <location>
        <position position="298"/>
    </location>
    <ligand>
        <name>substrate</name>
    </ligand>
</feature>
<feature type="binding site" evidence="1">
    <location>
        <position position="298"/>
    </location>
    <ligand>
        <name>Zn(2+)</name>
        <dbReference type="ChEBI" id="CHEBI:29105"/>
    </ligand>
</feature>